<keyword id="KW-0961">Cell wall biogenesis/degradation</keyword>
<keyword id="KW-0479">Metal-binding</keyword>
<keyword id="KW-0521">NADP</keyword>
<keyword id="KW-0560">Oxidoreductase</keyword>
<keyword id="KW-1185">Reference proteome</keyword>
<keyword id="KW-0777">Teichoic acid biosynthesis</keyword>
<keyword id="KW-0862">Zinc</keyword>
<accession>Q8DPI3</accession>
<reference key="1">
    <citation type="journal article" date="2001" name="J. Bacteriol.">
        <title>Genome of the bacterium Streptococcus pneumoniae strain R6.</title>
        <authorList>
            <person name="Hoskins J."/>
            <person name="Alborn W.E. Jr."/>
            <person name="Arnold J."/>
            <person name="Blaszczak L.C."/>
            <person name="Burgett S."/>
            <person name="DeHoff B.S."/>
            <person name="Estrem S.T."/>
            <person name="Fritz L."/>
            <person name="Fu D.-J."/>
            <person name="Fuller W."/>
            <person name="Geringer C."/>
            <person name="Gilmour R."/>
            <person name="Glass J.S."/>
            <person name="Khoja H."/>
            <person name="Kraft A.R."/>
            <person name="Lagace R.E."/>
            <person name="LeBlanc D.J."/>
            <person name="Lee L.N."/>
            <person name="Lefkowitz E.J."/>
            <person name="Lu J."/>
            <person name="Matsushima P."/>
            <person name="McAhren S.M."/>
            <person name="McHenney M."/>
            <person name="McLeaster K."/>
            <person name="Mundy C.W."/>
            <person name="Nicas T.I."/>
            <person name="Norris F.H."/>
            <person name="O'Gara M."/>
            <person name="Peery R.B."/>
            <person name="Robertson G.T."/>
            <person name="Rockey P."/>
            <person name="Sun P.-M."/>
            <person name="Winkler M.E."/>
            <person name="Yang Y."/>
            <person name="Young-Bellido M."/>
            <person name="Zhao G."/>
            <person name="Zook C.A."/>
            <person name="Baltz R.H."/>
            <person name="Jaskunas S.R."/>
            <person name="Rosteck P.R. Jr."/>
            <person name="Skatrud P.L."/>
            <person name="Glass J.I."/>
        </authorList>
    </citation>
    <scope>NUCLEOTIDE SEQUENCE [LARGE SCALE GENOMIC DNA]</scope>
    <source>
        <strain>ATCC BAA-255 / R6</strain>
    </source>
</reference>
<reference key="2">
    <citation type="journal article" date="2009" name="J. Bacteriol.">
        <title>Synthesis of CDP-activated ribitol for teichoic acid precursors in Streptococcus pneumoniae.</title>
        <authorList>
            <person name="Baur S."/>
            <person name="Marles-Wright J."/>
            <person name="Buckenmaier S."/>
            <person name="Lewis R.J."/>
            <person name="Vollmer W."/>
        </authorList>
    </citation>
    <scope>FUNCTION</scope>
    <scope>CATALYTIC ACTIVITY</scope>
    <scope>BIOPHYSICOCHEMICAL PROPERTIES</scope>
    <scope>PATHWAY</scope>
    <source>
        <strain>R36A</strain>
    </source>
</reference>
<sequence>MRKTSKMINQIYQLTKPKFINVKYQEEAIDQENHILIRPNYMAVCHADQRYYQGKRDPKILNKKLPMAMIHESCGTVISDPTGTYEVGQKVVMIPNQSPMQSDEEFYENYMTGTHFLSSGFDGFMREFVSLPKDRVVAYDAIEDTVAAITEFVSVGMHAMNRLLTLAHSKRERIAVIGDGSLAFVVANIINYTLPEAEIVVIGRHWEKLELFSFAKECYITDNIPEDLAFDHAFECCGGDGTGPAINDLIRYIRPQGTILMMGVSEYKVNLNTRDALEKGLILVGSSRSGRIDFENAIQMMEVKKFANRLKNILYLEEPVREIKDIHRVFATDLNTAFKTVFKWEV</sequence>
<gene>
    <name evidence="2 4" type="primary">tarJ</name>
    <name evidence="6" type="ordered locus">spr1148</name>
</gene>
<feature type="chain" id="PRO_0000437489" description="Ribulose-5-phosphate reductase">
    <location>
        <begin position="1"/>
        <end position="346"/>
    </location>
</feature>
<feature type="binding site" evidence="1 2">
    <location>
        <position position="45"/>
    </location>
    <ligand>
        <name>Zn(2+)</name>
        <dbReference type="ChEBI" id="CHEBI:29105"/>
        <note>catalytic</note>
    </ligand>
</feature>
<feature type="binding site" evidence="1 2">
    <location>
        <position position="71"/>
    </location>
    <ligand>
        <name>Zn(2+)</name>
        <dbReference type="ChEBI" id="CHEBI:29105"/>
        <note>catalytic</note>
    </ligand>
</feature>
<feature type="binding site" evidence="1 2">
    <location>
        <position position="72"/>
    </location>
    <ligand>
        <name>Zn(2+)</name>
        <dbReference type="ChEBI" id="CHEBI:29105"/>
        <note>catalytic</note>
    </ligand>
</feature>
<feature type="binding site" evidence="1 2">
    <location>
        <position position="151"/>
    </location>
    <ligand>
        <name>Zn(2+)</name>
        <dbReference type="ChEBI" id="CHEBI:29105"/>
        <note>catalytic</note>
    </ligand>
</feature>
<dbReference type="EC" id="1.1.1.405" evidence="2 3"/>
<dbReference type="EMBL" id="AE007317">
    <property type="protein sequence ID" value="AAK99951.1"/>
    <property type="molecule type" value="Genomic_DNA"/>
</dbReference>
<dbReference type="PIR" id="C98015">
    <property type="entry name" value="C98015"/>
</dbReference>
<dbReference type="RefSeq" id="NP_358741.1">
    <property type="nucleotide sequence ID" value="NC_003098.1"/>
</dbReference>
<dbReference type="SMR" id="Q8DPI3"/>
<dbReference type="STRING" id="171101.spr1148"/>
<dbReference type="KEGG" id="spr:spr1148"/>
<dbReference type="PATRIC" id="fig|171101.6.peg.1246"/>
<dbReference type="eggNOG" id="COG1063">
    <property type="taxonomic scope" value="Bacteria"/>
</dbReference>
<dbReference type="HOGENOM" id="CLU_823603_0_0_9"/>
<dbReference type="BioCyc" id="MetaCyc:MONOMER-20026"/>
<dbReference type="BRENDA" id="1.1.1.405">
    <property type="organism ID" value="1960"/>
</dbReference>
<dbReference type="UniPathway" id="UPA00790"/>
<dbReference type="Proteomes" id="UP000000586">
    <property type="component" value="Chromosome"/>
</dbReference>
<dbReference type="GO" id="GO:0050256">
    <property type="term" value="F:ribitol-5-phosphate 2-dehydrogenase [(NAD(P)+] activity"/>
    <property type="evidence" value="ECO:0007669"/>
    <property type="project" value="UniProtKB-UniRule"/>
</dbReference>
<dbReference type="GO" id="GO:0008270">
    <property type="term" value="F:zinc ion binding"/>
    <property type="evidence" value="ECO:0007669"/>
    <property type="project" value="UniProtKB-UniRule"/>
</dbReference>
<dbReference type="GO" id="GO:0071555">
    <property type="term" value="P:cell wall organization"/>
    <property type="evidence" value="ECO:0007669"/>
    <property type="project" value="UniProtKB-KW"/>
</dbReference>
<dbReference type="GO" id="GO:1902012">
    <property type="term" value="P:poly(ribitol phosphate) teichoic acid biosynthetic process"/>
    <property type="evidence" value="ECO:0007669"/>
    <property type="project" value="UniProtKB-UniRule"/>
</dbReference>
<dbReference type="CDD" id="cd08237">
    <property type="entry name" value="ribitol-5-phosphate_DH"/>
    <property type="match status" value="1"/>
</dbReference>
<dbReference type="Gene3D" id="3.90.180.10">
    <property type="entry name" value="Medium-chain alcohol dehydrogenases, catalytic domain"/>
    <property type="match status" value="1"/>
</dbReference>
<dbReference type="Gene3D" id="3.40.50.720">
    <property type="entry name" value="NAD(P)-binding Rossmann-like Domain"/>
    <property type="match status" value="1"/>
</dbReference>
<dbReference type="HAMAP" id="MF_02069">
    <property type="entry name" value="TarJ"/>
    <property type="match status" value="1"/>
</dbReference>
<dbReference type="InterPro" id="IPR013154">
    <property type="entry name" value="ADH-like_N"/>
</dbReference>
<dbReference type="InterPro" id="IPR011032">
    <property type="entry name" value="GroES-like_sf"/>
</dbReference>
<dbReference type="InterPro" id="IPR036291">
    <property type="entry name" value="NAD(P)-bd_dom_sf"/>
</dbReference>
<dbReference type="InterPro" id="IPR034710">
    <property type="entry name" value="TarJ"/>
</dbReference>
<dbReference type="PANTHER" id="PTHR43350:SF19">
    <property type="entry name" value="D-GULOSIDE 3-DEHYDROGENASE"/>
    <property type="match status" value="1"/>
</dbReference>
<dbReference type="PANTHER" id="PTHR43350">
    <property type="entry name" value="NAD-DEPENDENT ALCOHOL DEHYDROGENASE"/>
    <property type="match status" value="1"/>
</dbReference>
<dbReference type="Pfam" id="PF08240">
    <property type="entry name" value="ADH_N"/>
    <property type="match status" value="1"/>
</dbReference>
<dbReference type="SUPFAM" id="SSF50129">
    <property type="entry name" value="GroES-like"/>
    <property type="match status" value="1"/>
</dbReference>
<dbReference type="SUPFAM" id="SSF51735">
    <property type="entry name" value="NAD(P)-binding Rossmann-fold domains"/>
    <property type="match status" value="1"/>
</dbReference>
<proteinExistence type="evidence at protein level"/>
<protein>
    <recommendedName>
        <fullName evidence="2 4">Ribulose-5-phosphate reductase</fullName>
        <shortName evidence="2 5">Ribulose-5-P reductase</shortName>
        <ecNumber evidence="2 3">1.1.1.405</ecNumber>
    </recommendedName>
    <alternativeName>
        <fullName evidence="2 5">Ribitol-5-phosphate dehydrogenase</fullName>
    </alternativeName>
</protein>
<comment type="function">
    <text evidence="2 3">Catalyzes the NADPH dependent reduction of D-ribulose 5-phosphate to D-ribitol 5-phosphate.</text>
</comment>
<comment type="catalytic activity">
    <reaction evidence="2 3">
        <text>D-ribitol 5-phosphate + NADP(+) = D-ribulose 5-phosphate + NADPH + H(+)</text>
        <dbReference type="Rhea" id="RHEA:19921"/>
        <dbReference type="ChEBI" id="CHEBI:15378"/>
        <dbReference type="ChEBI" id="CHEBI:57695"/>
        <dbReference type="ChEBI" id="CHEBI:57783"/>
        <dbReference type="ChEBI" id="CHEBI:58121"/>
        <dbReference type="ChEBI" id="CHEBI:58349"/>
        <dbReference type="EC" id="1.1.1.405"/>
    </reaction>
</comment>
<comment type="cofactor">
    <cofactor evidence="1 2">
        <name>Zn(2+)</name>
        <dbReference type="ChEBI" id="CHEBI:29105"/>
    </cofactor>
</comment>
<comment type="biophysicochemical properties">
    <kinetics>
        <KM evidence="3">61 uM for D-ribulose 5-phosphate</KM>
        <text evidence="3">kcat is 0.5 sec(-1).</text>
    </kinetics>
</comment>
<comment type="pathway">
    <text evidence="2 3">Cell wall biogenesis; poly(ribitol phosphate) teichoic acid biosynthesis.</text>
</comment>
<comment type="similarity">
    <text evidence="2 5">Belongs to the zinc-containing alcohol dehydrogenase family.</text>
</comment>
<evidence type="ECO:0000250" key="1">
    <source>
        <dbReference type="UniProtKB" id="P25984"/>
    </source>
</evidence>
<evidence type="ECO:0000255" key="2">
    <source>
        <dbReference type="HAMAP-Rule" id="MF_02069"/>
    </source>
</evidence>
<evidence type="ECO:0000269" key="3">
    <source>
    </source>
</evidence>
<evidence type="ECO:0000303" key="4">
    <source>
    </source>
</evidence>
<evidence type="ECO:0000305" key="5"/>
<evidence type="ECO:0000312" key="6">
    <source>
        <dbReference type="EMBL" id="AAK99951.1"/>
    </source>
</evidence>
<organism>
    <name type="scientific">Streptococcus pneumoniae (strain ATCC BAA-255 / R6)</name>
    <dbReference type="NCBI Taxonomy" id="171101"/>
    <lineage>
        <taxon>Bacteria</taxon>
        <taxon>Bacillati</taxon>
        <taxon>Bacillota</taxon>
        <taxon>Bacilli</taxon>
        <taxon>Lactobacillales</taxon>
        <taxon>Streptococcaceae</taxon>
        <taxon>Streptococcus</taxon>
    </lineage>
</organism>
<name>TARJ_STRR6</name>